<reference key="1">
    <citation type="journal article" date="2003" name="Lancet">
        <title>Genome sequence of Vibrio parahaemolyticus: a pathogenic mechanism distinct from that of V. cholerae.</title>
        <authorList>
            <person name="Makino K."/>
            <person name="Oshima K."/>
            <person name="Kurokawa K."/>
            <person name="Yokoyama K."/>
            <person name="Uda T."/>
            <person name="Tagomori K."/>
            <person name="Iijima Y."/>
            <person name="Najima M."/>
            <person name="Nakano M."/>
            <person name="Yamashita A."/>
            <person name="Kubota Y."/>
            <person name="Kimura S."/>
            <person name="Yasunaga T."/>
            <person name="Honda T."/>
            <person name="Shinagawa H."/>
            <person name="Hattori M."/>
            <person name="Iida T."/>
        </authorList>
    </citation>
    <scope>NUCLEOTIDE SEQUENCE [LARGE SCALE GENOMIC DNA]</scope>
    <source>
        <strain>RIMD 2210633</strain>
    </source>
</reference>
<dbReference type="EC" id="6.3.5.3" evidence="1"/>
<dbReference type="EMBL" id="BA000031">
    <property type="protein sequence ID" value="BAC58929.1"/>
    <property type="molecule type" value="Genomic_DNA"/>
</dbReference>
<dbReference type="RefSeq" id="NP_797045.1">
    <property type="nucleotide sequence ID" value="NC_004603.1"/>
</dbReference>
<dbReference type="RefSeq" id="WP_005455948.1">
    <property type="nucleotide sequence ID" value="NC_004603.1"/>
</dbReference>
<dbReference type="SMR" id="Q87RW0"/>
<dbReference type="GeneID" id="1188141"/>
<dbReference type="KEGG" id="vpa:VP0666"/>
<dbReference type="PATRIC" id="fig|223926.6.peg.634"/>
<dbReference type="eggNOG" id="COG0046">
    <property type="taxonomic scope" value="Bacteria"/>
</dbReference>
<dbReference type="eggNOG" id="COG0047">
    <property type="taxonomic scope" value="Bacteria"/>
</dbReference>
<dbReference type="HOGENOM" id="CLU_001031_0_2_6"/>
<dbReference type="UniPathway" id="UPA00074">
    <property type="reaction ID" value="UER00128"/>
</dbReference>
<dbReference type="Proteomes" id="UP000002493">
    <property type="component" value="Chromosome 1"/>
</dbReference>
<dbReference type="GO" id="GO:0005737">
    <property type="term" value="C:cytoplasm"/>
    <property type="evidence" value="ECO:0007669"/>
    <property type="project" value="UniProtKB-SubCell"/>
</dbReference>
<dbReference type="GO" id="GO:0005524">
    <property type="term" value="F:ATP binding"/>
    <property type="evidence" value="ECO:0007669"/>
    <property type="project" value="UniProtKB-UniRule"/>
</dbReference>
<dbReference type="GO" id="GO:0046872">
    <property type="term" value="F:metal ion binding"/>
    <property type="evidence" value="ECO:0007669"/>
    <property type="project" value="UniProtKB-KW"/>
</dbReference>
<dbReference type="GO" id="GO:0004642">
    <property type="term" value="F:phosphoribosylformylglycinamidine synthase activity"/>
    <property type="evidence" value="ECO:0007669"/>
    <property type="project" value="UniProtKB-UniRule"/>
</dbReference>
<dbReference type="GO" id="GO:0006189">
    <property type="term" value="P:'de novo' IMP biosynthetic process"/>
    <property type="evidence" value="ECO:0007669"/>
    <property type="project" value="UniProtKB-UniRule"/>
</dbReference>
<dbReference type="CDD" id="cd01740">
    <property type="entry name" value="GATase1_FGAR_AT"/>
    <property type="match status" value="1"/>
</dbReference>
<dbReference type="CDD" id="cd02203">
    <property type="entry name" value="PurL_repeat1"/>
    <property type="match status" value="1"/>
</dbReference>
<dbReference type="FunFam" id="1.10.8.750:FF:000002">
    <property type="entry name" value="Phosphoribosylformylglycinamidine synthase"/>
    <property type="match status" value="1"/>
</dbReference>
<dbReference type="FunFam" id="3.30.1330.10:FF:000002">
    <property type="entry name" value="Phosphoribosylformylglycinamidine synthase"/>
    <property type="match status" value="1"/>
</dbReference>
<dbReference type="FunFam" id="3.30.1330.10:FF:000005">
    <property type="entry name" value="Phosphoribosylformylglycinamidine synthase"/>
    <property type="match status" value="1"/>
</dbReference>
<dbReference type="FunFam" id="3.40.50.880:FF:000008">
    <property type="entry name" value="Phosphoribosylformylglycinamidine synthase"/>
    <property type="match status" value="1"/>
</dbReference>
<dbReference type="FunFam" id="3.90.650.10:FF:000002">
    <property type="entry name" value="Phosphoribosylformylglycinamidine synthase"/>
    <property type="match status" value="1"/>
</dbReference>
<dbReference type="FunFam" id="3.90.650.10:FF:000005">
    <property type="entry name" value="Phosphoribosylformylglycinamidine synthase"/>
    <property type="match status" value="1"/>
</dbReference>
<dbReference type="Gene3D" id="3.40.50.880">
    <property type="match status" value="1"/>
</dbReference>
<dbReference type="Gene3D" id="1.10.8.750">
    <property type="entry name" value="Phosphoribosylformylglycinamidine synthase, linker domain"/>
    <property type="match status" value="1"/>
</dbReference>
<dbReference type="Gene3D" id="3.90.650.10">
    <property type="entry name" value="PurM-like C-terminal domain"/>
    <property type="match status" value="2"/>
</dbReference>
<dbReference type="Gene3D" id="3.30.1330.10">
    <property type="entry name" value="PurM-like, N-terminal domain"/>
    <property type="match status" value="2"/>
</dbReference>
<dbReference type="HAMAP" id="MF_00419">
    <property type="entry name" value="PurL_1"/>
    <property type="match status" value="1"/>
</dbReference>
<dbReference type="InterPro" id="IPR029062">
    <property type="entry name" value="Class_I_gatase-like"/>
</dbReference>
<dbReference type="InterPro" id="IPR040707">
    <property type="entry name" value="FGAR-AT_N"/>
</dbReference>
<dbReference type="InterPro" id="IPR055181">
    <property type="entry name" value="FGAR-AT_PurM_N-like"/>
</dbReference>
<dbReference type="InterPro" id="IPR010073">
    <property type="entry name" value="PurL_large"/>
</dbReference>
<dbReference type="InterPro" id="IPR041609">
    <property type="entry name" value="PurL_linker"/>
</dbReference>
<dbReference type="InterPro" id="IPR010918">
    <property type="entry name" value="PurM-like_C_dom"/>
</dbReference>
<dbReference type="InterPro" id="IPR036676">
    <property type="entry name" value="PurM-like_C_sf"/>
</dbReference>
<dbReference type="InterPro" id="IPR036921">
    <property type="entry name" value="PurM-like_N_sf"/>
</dbReference>
<dbReference type="InterPro" id="IPR036604">
    <property type="entry name" value="PurS-like_sf"/>
</dbReference>
<dbReference type="NCBIfam" id="TIGR01735">
    <property type="entry name" value="FGAM_synt"/>
    <property type="match status" value="1"/>
</dbReference>
<dbReference type="NCBIfam" id="NF003672">
    <property type="entry name" value="PRK05297.1"/>
    <property type="match status" value="1"/>
</dbReference>
<dbReference type="PANTHER" id="PTHR10099">
    <property type="entry name" value="PHOSPHORIBOSYLFORMYLGLYCINAMIDINE SYNTHASE"/>
    <property type="match status" value="1"/>
</dbReference>
<dbReference type="PANTHER" id="PTHR10099:SF1">
    <property type="entry name" value="PHOSPHORIBOSYLFORMYLGLYCINAMIDINE SYNTHASE"/>
    <property type="match status" value="1"/>
</dbReference>
<dbReference type="Pfam" id="PF02769">
    <property type="entry name" value="AIRS_C"/>
    <property type="match status" value="2"/>
</dbReference>
<dbReference type="Pfam" id="PF18072">
    <property type="entry name" value="FGAR-AT_linker"/>
    <property type="match status" value="1"/>
</dbReference>
<dbReference type="Pfam" id="PF18076">
    <property type="entry name" value="FGAR-AT_N"/>
    <property type="match status" value="1"/>
</dbReference>
<dbReference type="Pfam" id="PF22689">
    <property type="entry name" value="FGAR-AT_PurM_N-like"/>
    <property type="match status" value="1"/>
</dbReference>
<dbReference type="Pfam" id="PF13507">
    <property type="entry name" value="GATase_5"/>
    <property type="match status" value="1"/>
</dbReference>
<dbReference type="SMART" id="SM01211">
    <property type="entry name" value="GATase_5"/>
    <property type="match status" value="1"/>
</dbReference>
<dbReference type="SUPFAM" id="SSF52317">
    <property type="entry name" value="Class I glutamine amidotransferase-like"/>
    <property type="match status" value="1"/>
</dbReference>
<dbReference type="SUPFAM" id="SSF109736">
    <property type="entry name" value="FGAM synthase PurL, linker domain"/>
    <property type="match status" value="1"/>
</dbReference>
<dbReference type="SUPFAM" id="SSF56042">
    <property type="entry name" value="PurM C-terminal domain-like"/>
    <property type="match status" value="2"/>
</dbReference>
<dbReference type="SUPFAM" id="SSF55326">
    <property type="entry name" value="PurM N-terminal domain-like"/>
    <property type="match status" value="2"/>
</dbReference>
<dbReference type="SUPFAM" id="SSF82697">
    <property type="entry name" value="PurS-like"/>
    <property type="match status" value="1"/>
</dbReference>
<dbReference type="PROSITE" id="PS51273">
    <property type="entry name" value="GATASE_TYPE_1"/>
    <property type="match status" value="1"/>
</dbReference>
<comment type="function">
    <text evidence="1">Phosphoribosylformylglycinamidine synthase involved in the purines biosynthetic pathway. Catalyzes the ATP-dependent conversion of formylglycinamide ribonucleotide (FGAR) and glutamine to yield formylglycinamidine ribonucleotide (FGAM) and glutamate.</text>
</comment>
<comment type="catalytic activity">
    <reaction evidence="1">
        <text>N(2)-formyl-N(1)-(5-phospho-beta-D-ribosyl)glycinamide + L-glutamine + ATP + H2O = 2-formamido-N(1)-(5-O-phospho-beta-D-ribosyl)acetamidine + L-glutamate + ADP + phosphate + H(+)</text>
        <dbReference type="Rhea" id="RHEA:17129"/>
        <dbReference type="ChEBI" id="CHEBI:15377"/>
        <dbReference type="ChEBI" id="CHEBI:15378"/>
        <dbReference type="ChEBI" id="CHEBI:29985"/>
        <dbReference type="ChEBI" id="CHEBI:30616"/>
        <dbReference type="ChEBI" id="CHEBI:43474"/>
        <dbReference type="ChEBI" id="CHEBI:58359"/>
        <dbReference type="ChEBI" id="CHEBI:147286"/>
        <dbReference type="ChEBI" id="CHEBI:147287"/>
        <dbReference type="ChEBI" id="CHEBI:456216"/>
        <dbReference type="EC" id="6.3.5.3"/>
    </reaction>
</comment>
<comment type="pathway">
    <text evidence="1">Purine metabolism; IMP biosynthesis via de novo pathway; 5-amino-1-(5-phospho-D-ribosyl)imidazole from N(2)-formyl-N(1)-(5-phospho-D-ribosyl)glycinamide: step 1/2.</text>
</comment>
<comment type="subunit">
    <text evidence="1">Monomer.</text>
</comment>
<comment type="subcellular location">
    <subcellularLocation>
        <location evidence="1">Cytoplasm</location>
    </subcellularLocation>
</comment>
<comment type="similarity">
    <text evidence="1">In the N-terminal section; belongs to the FGAMS family.</text>
</comment>
<protein>
    <recommendedName>
        <fullName evidence="1">Phosphoribosylformylglycinamidine synthase</fullName>
        <shortName evidence="1">FGAM synthase</shortName>
        <shortName evidence="1">FGAMS</shortName>
        <ecNumber evidence="1">6.3.5.3</ecNumber>
    </recommendedName>
    <alternativeName>
        <fullName evidence="1">Formylglycinamide ribonucleotide amidotransferase</fullName>
        <shortName evidence="1">FGAR amidotransferase</shortName>
        <shortName evidence="1">FGAR-AT</shortName>
    </alternativeName>
</protein>
<name>PUR4_VIBPA</name>
<accession>Q87RW0</accession>
<evidence type="ECO:0000255" key="1">
    <source>
        <dbReference type="HAMAP-Rule" id="MF_00419"/>
    </source>
</evidence>
<gene>
    <name evidence="1" type="primary">purL</name>
    <name type="ordered locus">VP0666</name>
</gene>
<proteinExistence type="inferred from homology"/>
<keyword id="KW-0067">ATP-binding</keyword>
<keyword id="KW-0963">Cytoplasm</keyword>
<keyword id="KW-0315">Glutamine amidotransferase</keyword>
<keyword id="KW-0436">Ligase</keyword>
<keyword id="KW-0460">Magnesium</keyword>
<keyword id="KW-0479">Metal-binding</keyword>
<keyword id="KW-0547">Nucleotide-binding</keyword>
<keyword id="KW-0658">Purine biosynthesis</keyword>
<sequence length="1302" mass="141687">MRILRGSPALSEFRVNKLLELCREQDLPVTGIYAEFMHFADLKSDLDDQELEKLEKLLTYGPTIEEHEPEGLLLLVTPRPGTISPWSSKSTDIAINCGLDTVKRLERGTAYYVESSVVLSEAQVDAVKALIHDRMMETVFTELEAASALFTVAEPKPVAHVDILAGGRLALEEANVSLGLALAEDEIDYLVENFTKLGRNPNDIELMMFAQANSEHCRHKIFNADWTIDGVDQEKSLFKMIKNTFETTPDHVLSAYKDNAAVMTGSKVGRFFPDPKSRQYTYHHEDAHILMKVETHNHPTAISPWPGASTGSGGEIRDEGATGIGGKPKAGLVGFTTSNLRIPGFEQPWETDFGKPGRIVNALDIMLEGPLGGAAFNNEFGRPNLLGYFRTYEEKVTSHAGEEVRGYHKPIMIAGGMGNIRDEHVQKKEIPVGASLIVLGGPAMNIGLGGGAASSMASGQSAEDLDFASVQRENPEMERRCQEVIDRCWQLGEENPIAFIHDVGAGGISNALPELCDDGERGGKFQLRDVPNDELSMSPLEIWCNESQERYVLAVAPENMEAFDAICKRERAPYAVVGVATEERHLTLEDSHFDNTPIDMPMDILLGKTPKMHREATTLKVDSPAIARDGIEIDEAADRVLRLPTVAEKTFLITIGDRSVTGLVARDQMVGPWQVPVANCAVTAASYDTYHGEAMSMGERTPVALLDFGASARLAVGESLTNIAATDIGDIKRIKLSANWMSPAGHPGEDAGLYEAVKAVGEELCPALGLTIPVGKDSMSMKTKWEENGESKEVTSPLSLVITAFGRVEDVRKTVTPQLRTSDTLEGLGDTSLVLVDLGNGKNRLGATALAQVYKQLGDKPADVDNAEQLKGFFDAMQNLVRNDKLLAYHDKGDGGLFVTLAEMAFAGHCGVKADIAELGEDALAVLFNEELGAVVQVKNDDLDSVLSTLAANGLEACSHVIGSVEASDDFVFTSGDDVVLKRSRTELRVIWAETTHKMQALRDNPACADQEFEAKKDNTDPGLNVSLSFDVNEDIAAPYIAKGAKPKMAILREQGVNSHVEMAAAFDRAGFEATDIHMSDILTGQAVLDEYQGLVACGGFSYGDVLGAGEGWAKSILFNAQAREQFQAFFNREETFSLGVCNGCQMLSNLKELIPGADLWPRFVRNESERFEARFSLVEVQKSDSVFFDGMAGSRMPIAVSHGEGRVEVRDGEHLNAIEASGTVALRYVDNNGNPTQQYPNNPNGSPNAITGLTTADGRVTIMMPHPERVFRTVANSWAPEGWGENGAWMRMFQNARKNIG</sequence>
<feature type="chain" id="PRO_0000100421" description="Phosphoribosylformylglycinamidine synthase">
    <location>
        <begin position="1"/>
        <end position="1302"/>
    </location>
</feature>
<feature type="domain" description="Glutamine amidotransferase type-1" evidence="1">
    <location>
        <begin position="1049"/>
        <end position="1302"/>
    </location>
</feature>
<feature type="active site" description="Nucleophile" evidence="1">
    <location>
        <position position="1142"/>
    </location>
</feature>
<feature type="active site" evidence="1">
    <location>
        <position position="1267"/>
    </location>
</feature>
<feature type="active site" evidence="1">
    <location>
        <position position="1269"/>
    </location>
</feature>
<feature type="binding site" evidence="1">
    <location>
        <begin position="307"/>
        <end position="318"/>
    </location>
    <ligand>
        <name>ATP</name>
        <dbReference type="ChEBI" id="CHEBI:30616"/>
    </ligand>
</feature>
<feature type="binding site" evidence="1">
    <location>
        <position position="678"/>
    </location>
    <ligand>
        <name>ATP</name>
        <dbReference type="ChEBI" id="CHEBI:30616"/>
    </ligand>
</feature>
<feature type="binding site" evidence="1">
    <location>
        <position position="718"/>
    </location>
    <ligand>
        <name>Mg(2+)</name>
        <dbReference type="ChEBI" id="CHEBI:18420"/>
    </ligand>
</feature>
<feature type="binding site" evidence="1">
    <location>
        <position position="722"/>
    </location>
    <ligand>
        <name>Mg(2+)</name>
        <dbReference type="ChEBI" id="CHEBI:18420"/>
    </ligand>
</feature>
<feature type="binding site" evidence="1">
    <location>
        <position position="891"/>
    </location>
    <ligand>
        <name>Mg(2+)</name>
        <dbReference type="ChEBI" id="CHEBI:18420"/>
    </ligand>
</feature>
<organism>
    <name type="scientific">Vibrio parahaemolyticus serotype O3:K6 (strain RIMD 2210633)</name>
    <dbReference type="NCBI Taxonomy" id="223926"/>
    <lineage>
        <taxon>Bacteria</taxon>
        <taxon>Pseudomonadati</taxon>
        <taxon>Pseudomonadota</taxon>
        <taxon>Gammaproteobacteria</taxon>
        <taxon>Vibrionales</taxon>
        <taxon>Vibrionaceae</taxon>
        <taxon>Vibrio</taxon>
    </lineage>
</organism>